<comment type="function">
    <text evidence="4">Involved in the migration and outgrowth of muscles, axons and excretory canals.</text>
</comment>
<comment type="subunit">
    <text evidence="4 5">Interacts with sem-5 (PubMed:12091307). Interacts with cmd-1 in the presence of Ca(2+) (PubMed:17854888).</text>
</comment>
<comment type="alternative products">
    <event type="alternative splicing"/>
    <isoform>
        <id>Q7YSI9-1</id>
        <name>c</name>
        <sequence type="displayed"/>
    </isoform>
    <isoform>
        <id>Q7YSI9-2</id>
        <name>a</name>
        <sequence type="described" ref="VSP_025273"/>
    </isoform>
    <isoform>
        <id>Q7YSI9-3</id>
        <name>b</name>
        <sequence type="described" ref="VSP_025272 VSP_025274"/>
    </isoform>
    <isoform>
        <id>Q7YSI9-4</id>
        <name>e</name>
        <sequence type="described" ref="VSP_025270"/>
    </isoform>
    <isoform>
        <id>Q7YSI9-5</id>
        <name>d</name>
        <sequence type="described" ref="VSP_025271"/>
    </isoform>
</comment>
<comment type="similarity">
    <text evidence="7">Belongs to the Nav/unc-53 family.</text>
</comment>
<accession>Q7YSI9</accession>
<accession>Q7YSI0</accession>
<accession>Q7YXD0</accession>
<accession>Q8MLZ1</accession>
<accession>Q8MM94</accession>
<accession>Q8MV03</accession>
<gene>
    <name type="primary">unc-53</name>
    <name type="ORF">F45E10.1</name>
</gene>
<feature type="chain" id="PRO_0000286979" description="Adapter protein unc-53">
    <location>
        <begin position="1"/>
        <end position="1654"/>
    </location>
</feature>
<feature type="domain" description="Calponin-homology (CH)" evidence="2">
    <location>
        <begin position="6"/>
        <end position="115"/>
    </location>
</feature>
<feature type="region of interest" description="Disordered" evidence="3">
    <location>
        <begin position="128"/>
        <end position="261"/>
    </location>
</feature>
<feature type="region of interest" description="Disordered" evidence="3">
    <location>
        <begin position="274"/>
        <end position="364"/>
    </location>
</feature>
<feature type="region of interest" description="Disordered" evidence="3">
    <location>
        <begin position="381"/>
        <end position="440"/>
    </location>
</feature>
<feature type="region of interest" description="Disordered" evidence="3">
    <location>
        <begin position="480"/>
        <end position="501"/>
    </location>
</feature>
<feature type="region of interest" description="Disordered" evidence="3">
    <location>
        <begin position="595"/>
        <end position="626"/>
    </location>
</feature>
<feature type="region of interest" description="Disordered" evidence="3">
    <location>
        <begin position="650"/>
        <end position="680"/>
    </location>
</feature>
<feature type="region of interest" description="Disordered" evidence="3">
    <location>
        <begin position="698"/>
        <end position="729"/>
    </location>
</feature>
<feature type="region of interest" description="Disordered" evidence="3">
    <location>
        <begin position="747"/>
        <end position="799"/>
    </location>
</feature>
<feature type="region of interest" description="Disordered" evidence="3">
    <location>
        <begin position="1059"/>
        <end position="1083"/>
    </location>
</feature>
<feature type="coiled-coil region" evidence="1">
    <location>
        <begin position="962"/>
        <end position="994"/>
    </location>
</feature>
<feature type="coiled-coil region" evidence="1">
    <location>
        <begin position="1152"/>
        <end position="1184"/>
    </location>
</feature>
<feature type="compositionally biased region" description="Low complexity" evidence="3">
    <location>
        <begin position="143"/>
        <end position="161"/>
    </location>
</feature>
<feature type="compositionally biased region" description="Polar residues" evidence="3">
    <location>
        <begin position="162"/>
        <end position="174"/>
    </location>
</feature>
<feature type="compositionally biased region" description="Low complexity" evidence="3">
    <location>
        <begin position="197"/>
        <end position="243"/>
    </location>
</feature>
<feature type="compositionally biased region" description="Polar residues" evidence="3">
    <location>
        <begin position="244"/>
        <end position="261"/>
    </location>
</feature>
<feature type="compositionally biased region" description="Low complexity" evidence="3">
    <location>
        <begin position="310"/>
        <end position="327"/>
    </location>
</feature>
<feature type="compositionally biased region" description="Basic and acidic residues" evidence="3">
    <location>
        <begin position="388"/>
        <end position="397"/>
    </location>
</feature>
<feature type="compositionally biased region" description="Low complexity" evidence="3">
    <location>
        <begin position="407"/>
        <end position="429"/>
    </location>
</feature>
<feature type="compositionally biased region" description="Polar residues" evidence="3">
    <location>
        <begin position="595"/>
        <end position="607"/>
    </location>
</feature>
<feature type="compositionally biased region" description="Low complexity" evidence="3">
    <location>
        <begin position="705"/>
        <end position="722"/>
    </location>
</feature>
<feature type="compositionally biased region" description="Polar residues" evidence="3">
    <location>
        <begin position="747"/>
        <end position="769"/>
    </location>
</feature>
<feature type="compositionally biased region" description="Polar residues" evidence="3">
    <location>
        <begin position="779"/>
        <end position="799"/>
    </location>
</feature>
<feature type="compositionally biased region" description="Low complexity" evidence="3">
    <location>
        <begin position="1061"/>
        <end position="1083"/>
    </location>
</feature>
<feature type="splice variant" id="VSP_025270" description="In isoform e." evidence="7">
    <location>
        <begin position="1"/>
        <end position="420"/>
    </location>
</feature>
<feature type="splice variant" id="VSP_025271" description="In isoform d." evidence="7">
    <location>
        <begin position="1"/>
        <end position="134"/>
    </location>
</feature>
<feature type="splice variant" id="VSP_025272" description="In isoform b." evidence="7">
    <location>
        <begin position="797"/>
        <end position="908"/>
    </location>
</feature>
<feature type="splice variant" id="VSP_025273" description="In isoform a." evidence="6">
    <location>
        <begin position="838"/>
        <end position="908"/>
    </location>
</feature>
<feature type="splice variant" id="VSP_025274" description="In isoform b." evidence="7">
    <original>W</original>
    <variation>WALSVDSQ</variation>
    <location>
        <position position="1093"/>
    </location>
</feature>
<feature type="sequence conflict" description="In Ref. 1; AAM22693." evidence="7" ref="1">
    <original>P</original>
    <variation>S</variation>
    <location>
        <position position="1257"/>
    </location>
</feature>
<feature type="sequence conflict" description="In Ref. 1; AAM22693." evidence="7" ref="1">
    <original>E</original>
    <variation>K</variation>
    <location>
        <position position="1600"/>
    </location>
</feature>
<name>UNC53_CAEEL</name>
<evidence type="ECO:0000255" key="1"/>
<evidence type="ECO:0000255" key="2">
    <source>
        <dbReference type="PROSITE-ProRule" id="PRU00044"/>
    </source>
</evidence>
<evidence type="ECO:0000256" key="3">
    <source>
        <dbReference type="SAM" id="MobiDB-lite"/>
    </source>
</evidence>
<evidence type="ECO:0000269" key="4">
    <source>
    </source>
</evidence>
<evidence type="ECO:0000269" key="5">
    <source>
    </source>
</evidence>
<evidence type="ECO:0000303" key="6">
    <source>
    </source>
</evidence>
<evidence type="ECO:0000305" key="7"/>
<reference key="1">
    <citation type="journal article" date="2002" name="Development">
        <title>unc-53 controls longitudinal migration in C. elegans.</title>
        <authorList>
            <person name="Stringham E."/>
            <person name="Pujol N."/>
            <person name="Vandekerckhove J."/>
            <person name="Bogaert T."/>
        </authorList>
    </citation>
    <scope>NUCLEOTIDE SEQUENCE [MRNA] (ISOFORM A)</scope>
    <scope>FUNCTION</scope>
    <scope>INTERACTION WITH SEM-5</scope>
</reference>
<reference key="2">
    <citation type="journal article" date="1998" name="Science">
        <title>Genome sequence of the nematode C. elegans: a platform for investigating biology.</title>
        <authorList>
            <consortium name="The C. elegans sequencing consortium"/>
        </authorList>
    </citation>
    <scope>NUCLEOTIDE SEQUENCE [LARGE SCALE GENOMIC DNA]</scope>
    <scope>ALTERNATIVE SPLICING</scope>
    <source>
        <strain>Bristol N2</strain>
    </source>
</reference>
<reference key="3">
    <citation type="journal article" date="2008" name="Cell Calcium">
        <title>Ca(2+)/Calmodulin-binding proteins from the C. elegans proteome.</title>
        <authorList>
            <person name="Shen X."/>
            <person name="Valencia C.A."/>
            <person name="Gao W."/>
            <person name="Cotten S.W."/>
            <person name="Dong B."/>
            <person name="Huang B.C."/>
            <person name="Liu R."/>
        </authorList>
    </citation>
    <scope>INTERACTION WITH CMD-1</scope>
</reference>
<proteinExistence type="evidence at protein level"/>
<protein>
    <recommendedName>
        <fullName>Adapter protein unc-53</fullName>
    </recommendedName>
    <alternativeName>
        <fullName>Uncoordinated protein 53</fullName>
    </alternativeName>
</protein>
<dbReference type="EMBL" id="AF504312">
    <property type="protein sequence ID" value="AAM22693.1"/>
    <property type="molecule type" value="mRNA"/>
</dbReference>
<dbReference type="EMBL" id="Z50109">
    <property type="protein sequence ID" value="CAD44091.1"/>
    <property type="molecule type" value="Genomic_DNA"/>
</dbReference>
<dbReference type="EMBL" id="Z47810">
    <property type="protein sequence ID" value="CAD44091.1"/>
    <property type="status" value="JOINED"/>
    <property type="molecule type" value="Genomic_DNA"/>
</dbReference>
<dbReference type="EMBL" id="Z50109">
    <property type="protein sequence ID" value="CAD44092.1"/>
    <property type="molecule type" value="Genomic_DNA"/>
</dbReference>
<dbReference type="EMBL" id="Z47810">
    <property type="protein sequence ID" value="CAD44092.1"/>
    <property type="status" value="JOINED"/>
    <property type="molecule type" value="Genomic_DNA"/>
</dbReference>
<dbReference type="EMBL" id="Z47810">
    <property type="protein sequence ID" value="CAD44132.1"/>
    <property type="molecule type" value="Genomic_DNA"/>
</dbReference>
<dbReference type="EMBL" id="Z50109">
    <property type="protein sequence ID" value="CAD44132.1"/>
    <property type="status" value="JOINED"/>
    <property type="molecule type" value="Genomic_DNA"/>
</dbReference>
<dbReference type="EMBL" id="Z47810">
    <property type="protein sequence ID" value="CAD44133.1"/>
    <property type="molecule type" value="Genomic_DNA"/>
</dbReference>
<dbReference type="EMBL" id="Z50109">
    <property type="protein sequence ID" value="CAD44133.1"/>
    <property type="status" value="JOINED"/>
    <property type="molecule type" value="Genomic_DNA"/>
</dbReference>
<dbReference type="EMBL" id="Z50109">
    <property type="protein sequence ID" value="CAD89729.3"/>
    <property type="molecule type" value="Genomic_DNA"/>
</dbReference>
<dbReference type="EMBL" id="Z47810">
    <property type="protein sequence ID" value="CAD89729.3"/>
    <property type="status" value="JOINED"/>
    <property type="molecule type" value="Genomic_DNA"/>
</dbReference>
<dbReference type="EMBL" id="Z47810">
    <property type="protein sequence ID" value="CAD89730.3"/>
    <property type="molecule type" value="Genomic_DNA"/>
</dbReference>
<dbReference type="EMBL" id="Z50109">
    <property type="protein sequence ID" value="CAD89730.3"/>
    <property type="status" value="JOINED"/>
    <property type="molecule type" value="Genomic_DNA"/>
</dbReference>
<dbReference type="EMBL" id="Z50109">
    <property type="protein sequence ID" value="CAD91624.1"/>
    <property type="molecule type" value="Genomic_DNA"/>
</dbReference>
<dbReference type="EMBL" id="Z47810">
    <property type="protein sequence ID" value="CAD91624.1"/>
    <property type="status" value="JOINED"/>
    <property type="molecule type" value="Genomic_DNA"/>
</dbReference>
<dbReference type="EMBL" id="Z47810">
    <property type="protein sequence ID" value="CAD91631.1"/>
    <property type="molecule type" value="Genomic_DNA"/>
</dbReference>
<dbReference type="EMBL" id="Z47810">
    <property type="protein sequence ID" value="CAD91632.1"/>
    <property type="molecule type" value="Genomic_DNA"/>
</dbReference>
<dbReference type="EMBL" id="Z50109">
    <property type="protein sequence ID" value="CAD91632.1"/>
    <property type="status" value="JOINED"/>
    <property type="molecule type" value="Genomic_DNA"/>
</dbReference>
<dbReference type="RefSeq" id="NP_001022169.1">
    <molecule id="Q7YSI9-3"/>
    <property type="nucleotide sequence ID" value="NM_001026998.5"/>
</dbReference>
<dbReference type="RefSeq" id="NP_001022170.1">
    <molecule id="Q7YSI9-1"/>
    <property type="nucleotide sequence ID" value="NM_001026999.8"/>
</dbReference>
<dbReference type="RefSeq" id="NP_001022171.1">
    <molecule id="Q7YSI9-5"/>
    <property type="nucleotide sequence ID" value="NM_001027000.6"/>
</dbReference>
<dbReference type="RefSeq" id="NP_001022172.1">
    <molecule id="Q7YSI9-4"/>
    <property type="nucleotide sequence ID" value="NM_001027001.5"/>
</dbReference>
<dbReference type="RefSeq" id="NP_741045.1">
    <molecule id="Q7YSI9-2"/>
    <property type="nucleotide sequence ID" value="NM_171039.3"/>
</dbReference>
<dbReference type="SMR" id="Q7YSI9"/>
<dbReference type="BioGRID" id="40003">
    <property type="interactions" value="6"/>
</dbReference>
<dbReference type="FunCoup" id="Q7YSI9">
    <property type="interactions" value="1349"/>
</dbReference>
<dbReference type="IntAct" id="Q7YSI9">
    <property type="interactions" value="1"/>
</dbReference>
<dbReference type="STRING" id="6239.F45E10.1c.1"/>
<dbReference type="PaxDb" id="6239-F45E10.1c"/>
<dbReference type="EnsemblMetazoa" id="F45E10.1a.1">
    <molecule id="Q7YSI9-2"/>
    <property type="protein sequence ID" value="F45E10.1a.1"/>
    <property type="gene ID" value="WBGene00006788"/>
</dbReference>
<dbReference type="EnsemblMetazoa" id="F45E10.1b.1">
    <molecule id="Q7YSI9-3"/>
    <property type="protein sequence ID" value="F45E10.1b.1"/>
    <property type="gene ID" value="WBGene00006788"/>
</dbReference>
<dbReference type="EnsemblMetazoa" id="F45E10.1c.1">
    <molecule id="Q7YSI9-1"/>
    <property type="protein sequence ID" value="F45E10.1c.1"/>
    <property type="gene ID" value="WBGene00006788"/>
</dbReference>
<dbReference type="EnsemblMetazoa" id="F45E10.1d.1">
    <molecule id="Q7YSI9-5"/>
    <property type="protein sequence ID" value="F45E10.1d.1"/>
    <property type="gene ID" value="WBGene00006788"/>
</dbReference>
<dbReference type="EnsemblMetazoa" id="F45E10.1e.1">
    <molecule id="Q7YSI9-4"/>
    <property type="protein sequence ID" value="F45E10.1e.1"/>
    <property type="gene ID" value="WBGene00006788"/>
</dbReference>
<dbReference type="GeneID" id="174693"/>
<dbReference type="KEGG" id="cel:CELE_F45E10.1"/>
<dbReference type="UCSC" id="F45E10.1a">
    <molecule id="Q7YSI9-1"/>
    <property type="organism name" value="c. elegans"/>
</dbReference>
<dbReference type="AGR" id="WB:WBGene00006788"/>
<dbReference type="CTD" id="174693"/>
<dbReference type="WormBase" id="F45E10.1a">
    <molecule id="Q7YSI9-2"/>
    <property type="protein sequence ID" value="CE31346"/>
    <property type="gene ID" value="WBGene00006788"/>
    <property type="gene designation" value="unc-53"/>
</dbReference>
<dbReference type="WormBase" id="F45E10.1b">
    <molecule id="Q7YSI9-3"/>
    <property type="protein sequence ID" value="CE31347"/>
    <property type="gene ID" value="WBGene00006788"/>
    <property type="gene designation" value="unc-53"/>
</dbReference>
<dbReference type="WormBase" id="F45E10.1c">
    <molecule id="Q7YSI9-1"/>
    <property type="protein sequence ID" value="CE33783"/>
    <property type="gene ID" value="WBGene00006788"/>
    <property type="gene designation" value="unc-53"/>
</dbReference>
<dbReference type="WormBase" id="F45E10.1d">
    <molecule id="Q7YSI9-5"/>
    <property type="protein sequence ID" value="CE34019"/>
    <property type="gene ID" value="WBGene00006788"/>
    <property type="gene designation" value="unc-53"/>
</dbReference>
<dbReference type="WormBase" id="F45E10.1e">
    <molecule id="Q7YSI9-4"/>
    <property type="protein sequence ID" value="CE34020"/>
    <property type="gene ID" value="WBGene00006788"/>
    <property type="gene designation" value="unc-53"/>
</dbReference>
<dbReference type="eggNOG" id="ENOG502QPT3">
    <property type="taxonomic scope" value="Eukaryota"/>
</dbReference>
<dbReference type="GeneTree" id="ENSGT00940000168701"/>
<dbReference type="InParanoid" id="Q7YSI9"/>
<dbReference type="OMA" id="LECYKNT"/>
<dbReference type="OrthoDB" id="2161974at2759"/>
<dbReference type="PRO" id="PR:Q7YSI9"/>
<dbReference type="Proteomes" id="UP000001940">
    <property type="component" value="Chromosome II"/>
</dbReference>
<dbReference type="Bgee" id="WBGene00006788">
    <property type="expression patterns" value="Expressed in pharyngeal muscle cell (C elegans) and 3 other cell types or tissues"/>
</dbReference>
<dbReference type="ExpressionAtlas" id="Q7YSI9">
    <property type="expression patterns" value="baseline and differential"/>
</dbReference>
<dbReference type="GO" id="GO:0005737">
    <property type="term" value="C:cytoplasm"/>
    <property type="evidence" value="ECO:0000314"/>
    <property type="project" value="WormBase"/>
</dbReference>
<dbReference type="GO" id="GO:0051015">
    <property type="term" value="F:actin filament binding"/>
    <property type="evidence" value="ECO:0000304"/>
    <property type="project" value="WormBase"/>
</dbReference>
<dbReference type="GO" id="GO:0005516">
    <property type="term" value="F:calmodulin binding"/>
    <property type="evidence" value="ECO:0007669"/>
    <property type="project" value="UniProtKB-KW"/>
</dbReference>
<dbReference type="GO" id="GO:0030036">
    <property type="term" value="P:actin cytoskeleton organization"/>
    <property type="evidence" value="ECO:0000250"/>
    <property type="project" value="WormBase"/>
</dbReference>
<dbReference type="GO" id="GO:0007411">
    <property type="term" value="P:axon guidance"/>
    <property type="evidence" value="ECO:0000315"/>
    <property type="project" value="WormBase"/>
</dbReference>
<dbReference type="GO" id="GO:0043057">
    <property type="term" value="P:backward locomotion"/>
    <property type="evidence" value="ECO:0000315"/>
    <property type="project" value="WormBase"/>
</dbReference>
<dbReference type="GO" id="GO:0048858">
    <property type="term" value="P:cell projection morphogenesis"/>
    <property type="evidence" value="ECO:0000315"/>
    <property type="project" value="WormBase"/>
</dbReference>
<dbReference type="GO" id="GO:0016204">
    <property type="term" value="P:determination of muscle attachment site"/>
    <property type="evidence" value="ECO:0000315"/>
    <property type="project" value="WormBase"/>
</dbReference>
<dbReference type="GO" id="GO:0018991">
    <property type="term" value="P:egg-laying behavior"/>
    <property type="evidence" value="ECO:0000315"/>
    <property type="project" value="WormBase"/>
</dbReference>
<dbReference type="GO" id="GO:0007617">
    <property type="term" value="P:mating behavior"/>
    <property type="evidence" value="ECO:0000315"/>
    <property type="project" value="WormBase"/>
</dbReference>
<dbReference type="GO" id="GO:0008078">
    <property type="term" value="P:mesodermal cell migration"/>
    <property type="evidence" value="ECO:0000316"/>
    <property type="project" value="WormBase"/>
</dbReference>
<dbReference type="GO" id="GO:0008045">
    <property type="term" value="P:motor neuron axon guidance"/>
    <property type="evidence" value="ECO:0000316"/>
    <property type="project" value="UniProtKB"/>
</dbReference>
<dbReference type="GO" id="GO:0045773">
    <property type="term" value="P:positive regulation of axon extension"/>
    <property type="evidence" value="ECO:0000315"/>
    <property type="project" value="WormBase"/>
</dbReference>
<dbReference type="GO" id="GO:0048842">
    <property type="term" value="P:positive regulation of axon extension involved in axon guidance"/>
    <property type="evidence" value="ECO:0000315"/>
    <property type="project" value="UniProtKB"/>
</dbReference>
<dbReference type="GO" id="GO:0030335">
    <property type="term" value="P:positive regulation of cell migration"/>
    <property type="evidence" value="ECO:0000316"/>
    <property type="project" value="WormBase"/>
</dbReference>
<dbReference type="GO" id="GO:0040018">
    <property type="term" value="P:positive regulation of multicellular organism growth"/>
    <property type="evidence" value="ECO:0000315"/>
    <property type="project" value="WormBase"/>
</dbReference>
<dbReference type="GO" id="GO:0007165">
    <property type="term" value="P:signal transduction"/>
    <property type="evidence" value="ECO:0000353"/>
    <property type="project" value="WormBase"/>
</dbReference>
<dbReference type="CDD" id="cd21212">
    <property type="entry name" value="CH_NAV2-like"/>
    <property type="match status" value="1"/>
</dbReference>
<dbReference type="Gene3D" id="1.10.418.10">
    <property type="entry name" value="Calponin-like domain"/>
    <property type="match status" value="1"/>
</dbReference>
<dbReference type="Gene3D" id="3.40.50.300">
    <property type="entry name" value="P-loop containing nucleotide triphosphate hydrolases"/>
    <property type="match status" value="1"/>
</dbReference>
<dbReference type="InterPro" id="IPR001715">
    <property type="entry name" value="CH_dom"/>
</dbReference>
<dbReference type="InterPro" id="IPR036872">
    <property type="entry name" value="CH_dom_sf"/>
</dbReference>
<dbReference type="InterPro" id="IPR039041">
    <property type="entry name" value="Nav/unc-53"/>
</dbReference>
<dbReference type="InterPro" id="IPR027417">
    <property type="entry name" value="P-loop_NTPase"/>
</dbReference>
<dbReference type="PANTHER" id="PTHR12784:SF28">
    <property type="entry name" value="PROTEIN SICKIE"/>
    <property type="match status" value="1"/>
</dbReference>
<dbReference type="PANTHER" id="PTHR12784">
    <property type="entry name" value="STEERIN"/>
    <property type="match status" value="1"/>
</dbReference>
<dbReference type="Pfam" id="PF25408">
    <property type="entry name" value="AAA_lid_NAV1"/>
    <property type="match status" value="1"/>
</dbReference>
<dbReference type="Pfam" id="PF23092">
    <property type="entry name" value="Ubiquitin_6"/>
    <property type="match status" value="1"/>
</dbReference>
<dbReference type="SUPFAM" id="SSF47576">
    <property type="entry name" value="Calponin-homology domain, CH-domain"/>
    <property type="match status" value="1"/>
</dbReference>
<dbReference type="SUPFAM" id="SSF52540">
    <property type="entry name" value="P-loop containing nucleoside triphosphate hydrolases"/>
    <property type="match status" value="1"/>
</dbReference>
<dbReference type="PROSITE" id="PS50021">
    <property type="entry name" value="CH"/>
    <property type="match status" value="1"/>
</dbReference>
<organism>
    <name type="scientific">Caenorhabditis elegans</name>
    <dbReference type="NCBI Taxonomy" id="6239"/>
    <lineage>
        <taxon>Eukaryota</taxon>
        <taxon>Metazoa</taxon>
        <taxon>Ecdysozoa</taxon>
        <taxon>Nematoda</taxon>
        <taxon>Chromadorea</taxon>
        <taxon>Rhabditida</taxon>
        <taxon>Rhabditina</taxon>
        <taxon>Rhabditomorpha</taxon>
        <taxon>Rhabditoidea</taxon>
        <taxon>Rhabditidae</taxon>
        <taxon>Peloderinae</taxon>
        <taxon>Caenorhabditis</taxon>
    </lineage>
</organism>
<sequence>MTTSNVELIPIYTDWANRHLSKGSLSKSIRDISNDFRDYRLVSQLINVIVPINEFSPAFTKRLAKITSNLDGLETCLDYLKNLGLDCSKLTKTDIDSGNLGAVLQLLFLLSTYKQKLRQLKKDQKKLEQLPTSIMPPAVSKLPSPRVATSATASATNPNSNFPQMSTSRLQTPQSRISKIDSSKIGIKPKTSGLKPPSSSTTSSNNTNSFRPSSRSSGNNNVGSTISTSAKSLESSSTYSSISNLNRPTSQLQKPSRPQTQLVRVATTTKIGSSKLAAPKAVSTPKLASVKTIGAKQEPDNSGGGGGGMLKLKLFSSKNPSSSSNSPQPTRKAAAVPQQQTLSKIAAPVKSGLKPPTSKLGSATSMSKLCTPKVSYRKTDAPIISQQDSKRCSKSSEEESGYAGFNSTSPTSSSTEGSLSMHSTSSKSSTSDEKSPSSDDLTLNASIVTAIRQPIAATPVSPNIINKPVEEKPTLAVKGVKSTAKKDPPPAVPPRDTQPTIGVVSPIMAHKKLTNDPVISEKPEPEKLQSMSIDTTDVPPLPPLKSVVPLKMTSIRQPPTYDVLLKQGKITSPVKSFGYEQSSASEDSIVAHASAQVTPPTKTSGNHSLERRMGKNKTSESSGYTSDAGVAMCAKMREKLKEYDDMTRRAQNGYPDNFEDSSSLSSGISDNNELDDISTDDLSGVDMATVASKHSDYSHFVRHPTSSSSKPRVPSRSSTSVDSRSRAEQENVYKLLSQCRTSQRGAAATSTFGQHSLRSPGYSSYSPHLSVSADKDTMSMHSQTSRRPSSQKPSYSGQFHSLDRKCHLQEFTSTEHRMAALLSPRRVPNSMSKYDSSAAALNASGMSRSMILLESLSPRPPRRHQSPADSCIITASPSAPRRSHSPRGPTARIPLSLASSPVHVNNNWGSYSARSRGGSSTGIYGETFQLHRLSDEKSPAHSAKSEMGSQLSLASTTAYGSLNEKYEHAIRDMARDLECYKNTVDSLTKKQENYGALFDLFEQKLRKLTQHIDRSNLKPEEAIRFRQDIAHLRDISNHLASNSAHANEGAGELLRQPSLESVASHRSSMSSSSKSSKQEKISLSSFGKNKKSWIRSSLSKFTKKKNKNYDEAHMPSISGSQGTLDNIDVIELKQELKERDSALYEVRLDNLDRAREVDVLRETVNKLKTENKQLKKEVDKLTNGPATRASSRASIPVIYDDEHVYDAACSSTSASQSSKRSSGCNSIKVTVNVDIAGEISSIVNPDKEIIVGYLAMPTSQSCWKDIDVSILGLFEVYLSRIDVEHQLGIDARDSILGYQIGELRRVIGDSTTMITSHPTDILTSSTTIRMFMHGAAQSRVDSLVLDMLLPKQMILQLVKSILTERRLVLAGATGIGKSKLAKTLAAYVSIRTNQSEDSIVNISIPENNKEELLQVERRLEKILRSKESCIVILDNIPKNRIAFVVSVFANVPLQNNEGPFVVCTVNRYQIPELQIHHNFKMSVMSNRLEGFILRYLRRRAVEDEYRLTVQMPSELFKIIDFFPIALQAVNNFIEKTNSVDVTVGPRACLNCPLTVDGSREWFIRLWNENFIPYLERVARDGKKTFGRCTSFEDPTDIVSEKWPWFDGENPENVLKRLQLQDLVPSPANSSRQHFNPLESLIQLHATKHQTIDNI</sequence>
<keyword id="KW-0025">Alternative splicing</keyword>
<keyword id="KW-0112">Calmodulin-binding</keyword>
<keyword id="KW-0175">Coiled coil</keyword>
<keyword id="KW-0217">Developmental protein</keyword>
<keyword id="KW-1185">Reference proteome</keyword>